<accession>Q12A45</accession>
<protein>
    <recommendedName>
        <fullName evidence="1">Ribonuclease HII</fullName>
        <shortName evidence="1">RNase HII</shortName>
        <ecNumber evidence="1">3.1.26.4</ecNumber>
    </recommendedName>
</protein>
<comment type="function">
    <text evidence="1">Endonuclease that specifically degrades the RNA of RNA-DNA hybrids.</text>
</comment>
<comment type="catalytic activity">
    <reaction evidence="1">
        <text>Endonucleolytic cleavage to 5'-phosphomonoester.</text>
        <dbReference type="EC" id="3.1.26.4"/>
    </reaction>
</comment>
<comment type="cofactor">
    <cofactor evidence="1">
        <name>Mn(2+)</name>
        <dbReference type="ChEBI" id="CHEBI:29035"/>
    </cofactor>
    <cofactor evidence="1">
        <name>Mg(2+)</name>
        <dbReference type="ChEBI" id="CHEBI:18420"/>
    </cofactor>
    <text evidence="1">Manganese or magnesium. Binds 1 divalent metal ion per monomer in the absence of substrate. May bind a second metal ion after substrate binding.</text>
</comment>
<comment type="subcellular location">
    <subcellularLocation>
        <location evidence="1">Cytoplasm</location>
    </subcellularLocation>
</comment>
<comment type="similarity">
    <text evidence="1">Belongs to the RNase HII family.</text>
</comment>
<evidence type="ECO:0000255" key="1">
    <source>
        <dbReference type="HAMAP-Rule" id="MF_00052"/>
    </source>
</evidence>
<evidence type="ECO:0000255" key="2">
    <source>
        <dbReference type="PROSITE-ProRule" id="PRU01319"/>
    </source>
</evidence>
<name>RNH2_POLSJ</name>
<sequence>MKAEQTPLSWDTPGLLAGVDEAGRGPLMGPVVAAAVILDELNPIKGLADSKKLTPQRREALYDEIRAKALCCSIALATAEEIDRLNILQATMLAMRRAVESLRLKPNKVLVDGNRLPTLAIVSEAVIGGDAIVPAISAASILAKVYRDRWCAEFHLEYPQYGFASHKGYSTAEHLAALREHGACPQHRRSFAPVAEVLR</sequence>
<gene>
    <name evidence="1" type="primary">rnhB</name>
    <name type="ordered locus">Bpro_2681</name>
</gene>
<keyword id="KW-0963">Cytoplasm</keyword>
<keyword id="KW-0255">Endonuclease</keyword>
<keyword id="KW-0378">Hydrolase</keyword>
<keyword id="KW-0464">Manganese</keyword>
<keyword id="KW-0479">Metal-binding</keyword>
<keyword id="KW-0540">Nuclease</keyword>
<keyword id="KW-1185">Reference proteome</keyword>
<feature type="chain" id="PRO_0000334936" description="Ribonuclease HII">
    <location>
        <begin position="1"/>
        <end position="199"/>
    </location>
</feature>
<feature type="domain" description="RNase H type-2" evidence="2">
    <location>
        <begin position="14"/>
        <end position="199"/>
    </location>
</feature>
<feature type="binding site" evidence="1">
    <location>
        <position position="20"/>
    </location>
    <ligand>
        <name>a divalent metal cation</name>
        <dbReference type="ChEBI" id="CHEBI:60240"/>
    </ligand>
</feature>
<feature type="binding site" evidence="1">
    <location>
        <position position="21"/>
    </location>
    <ligand>
        <name>a divalent metal cation</name>
        <dbReference type="ChEBI" id="CHEBI:60240"/>
    </ligand>
</feature>
<feature type="binding site" evidence="1">
    <location>
        <position position="112"/>
    </location>
    <ligand>
        <name>a divalent metal cation</name>
        <dbReference type="ChEBI" id="CHEBI:60240"/>
    </ligand>
</feature>
<proteinExistence type="inferred from homology"/>
<dbReference type="EC" id="3.1.26.4" evidence="1"/>
<dbReference type="EMBL" id="CP000316">
    <property type="protein sequence ID" value="ABE44597.1"/>
    <property type="molecule type" value="Genomic_DNA"/>
</dbReference>
<dbReference type="SMR" id="Q12A45"/>
<dbReference type="STRING" id="296591.Bpro_2681"/>
<dbReference type="KEGG" id="pol:Bpro_2681"/>
<dbReference type="eggNOG" id="COG0164">
    <property type="taxonomic scope" value="Bacteria"/>
</dbReference>
<dbReference type="HOGENOM" id="CLU_036532_3_2_4"/>
<dbReference type="Proteomes" id="UP000001983">
    <property type="component" value="Chromosome"/>
</dbReference>
<dbReference type="GO" id="GO:0005737">
    <property type="term" value="C:cytoplasm"/>
    <property type="evidence" value="ECO:0007669"/>
    <property type="project" value="UniProtKB-SubCell"/>
</dbReference>
<dbReference type="GO" id="GO:0032299">
    <property type="term" value="C:ribonuclease H2 complex"/>
    <property type="evidence" value="ECO:0007669"/>
    <property type="project" value="TreeGrafter"/>
</dbReference>
<dbReference type="GO" id="GO:0030145">
    <property type="term" value="F:manganese ion binding"/>
    <property type="evidence" value="ECO:0007669"/>
    <property type="project" value="UniProtKB-UniRule"/>
</dbReference>
<dbReference type="GO" id="GO:0003723">
    <property type="term" value="F:RNA binding"/>
    <property type="evidence" value="ECO:0007669"/>
    <property type="project" value="InterPro"/>
</dbReference>
<dbReference type="GO" id="GO:0004523">
    <property type="term" value="F:RNA-DNA hybrid ribonuclease activity"/>
    <property type="evidence" value="ECO:0007669"/>
    <property type="project" value="UniProtKB-UniRule"/>
</dbReference>
<dbReference type="GO" id="GO:0043137">
    <property type="term" value="P:DNA replication, removal of RNA primer"/>
    <property type="evidence" value="ECO:0007669"/>
    <property type="project" value="TreeGrafter"/>
</dbReference>
<dbReference type="GO" id="GO:0006298">
    <property type="term" value="P:mismatch repair"/>
    <property type="evidence" value="ECO:0007669"/>
    <property type="project" value="TreeGrafter"/>
</dbReference>
<dbReference type="CDD" id="cd07182">
    <property type="entry name" value="RNase_HII_bacteria_HII_like"/>
    <property type="match status" value="1"/>
</dbReference>
<dbReference type="FunFam" id="3.30.420.10:FF:000006">
    <property type="entry name" value="Ribonuclease HII"/>
    <property type="match status" value="1"/>
</dbReference>
<dbReference type="Gene3D" id="3.30.420.10">
    <property type="entry name" value="Ribonuclease H-like superfamily/Ribonuclease H"/>
    <property type="match status" value="1"/>
</dbReference>
<dbReference type="HAMAP" id="MF_00052_B">
    <property type="entry name" value="RNase_HII_B"/>
    <property type="match status" value="1"/>
</dbReference>
<dbReference type="InterPro" id="IPR022898">
    <property type="entry name" value="RNase_HII"/>
</dbReference>
<dbReference type="InterPro" id="IPR001352">
    <property type="entry name" value="RNase_HII/HIII"/>
</dbReference>
<dbReference type="InterPro" id="IPR024567">
    <property type="entry name" value="RNase_HII/HIII_dom"/>
</dbReference>
<dbReference type="InterPro" id="IPR012337">
    <property type="entry name" value="RNaseH-like_sf"/>
</dbReference>
<dbReference type="InterPro" id="IPR036397">
    <property type="entry name" value="RNaseH_sf"/>
</dbReference>
<dbReference type="NCBIfam" id="NF000594">
    <property type="entry name" value="PRK00015.1-1"/>
    <property type="match status" value="1"/>
</dbReference>
<dbReference type="NCBIfam" id="NF000595">
    <property type="entry name" value="PRK00015.1-3"/>
    <property type="match status" value="1"/>
</dbReference>
<dbReference type="NCBIfam" id="NF000596">
    <property type="entry name" value="PRK00015.1-4"/>
    <property type="match status" value="1"/>
</dbReference>
<dbReference type="PANTHER" id="PTHR10954">
    <property type="entry name" value="RIBONUCLEASE H2 SUBUNIT A"/>
    <property type="match status" value="1"/>
</dbReference>
<dbReference type="PANTHER" id="PTHR10954:SF18">
    <property type="entry name" value="RIBONUCLEASE HII"/>
    <property type="match status" value="1"/>
</dbReference>
<dbReference type="Pfam" id="PF01351">
    <property type="entry name" value="RNase_HII"/>
    <property type="match status" value="1"/>
</dbReference>
<dbReference type="SUPFAM" id="SSF53098">
    <property type="entry name" value="Ribonuclease H-like"/>
    <property type="match status" value="1"/>
</dbReference>
<dbReference type="PROSITE" id="PS51975">
    <property type="entry name" value="RNASE_H_2"/>
    <property type="match status" value="1"/>
</dbReference>
<organism>
    <name type="scientific">Polaromonas sp. (strain JS666 / ATCC BAA-500)</name>
    <dbReference type="NCBI Taxonomy" id="296591"/>
    <lineage>
        <taxon>Bacteria</taxon>
        <taxon>Pseudomonadati</taxon>
        <taxon>Pseudomonadota</taxon>
        <taxon>Betaproteobacteria</taxon>
        <taxon>Burkholderiales</taxon>
        <taxon>Comamonadaceae</taxon>
        <taxon>Polaromonas</taxon>
    </lineage>
</organism>
<reference key="1">
    <citation type="journal article" date="2008" name="Appl. Environ. Microbiol.">
        <title>The genome of Polaromonas sp. strain JS666: insights into the evolution of a hydrocarbon- and xenobiotic-degrading bacterium, and features of relevance to biotechnology.</title>
        <authorList>
            <person name="Mattes T.E."/>
            <person name="Alexander A.K."/>
            <person name="Richardson P.M."/>
            <person name="Munk A.C."/>
            <person name="Han C.S."/>
            <person name="Stothard P."/>
            <person name="Coleman N.V."/>
        </authorList>
    </citation>
    <scope>NUCLEOTIDE SEQUENCE [LARGE SCALE GENOMIC DNA]</scope>
    <source>
        <strain>JS666 / ATCC BAA-500</strain>
    </source>
</reference>